<protein>
    <recommendedName>
        <fullName>Probable tautomerase SMU_1087</fullName>
        <ecNumber>5.3.2.-</ecNumber>
    </recommendedName>
</protein>
<sequence>MPFVKIDLFEGRSQEQKIQLAREVTEVVSRVAKAPKEAIHVFINDMPEGTYYPHGEMKKKG</sequence>
<gene>
    <name type="ordered locus">SMU_1087</name>
</gene>
<feature type="initiator methionine" description="Removed" evidence="1">
    <location>
        <position position="1"/>
    </location>
</feature>
<feature type="chain" id="PRO_0000209552" description="Probable tautomerase SMU_1087">
    <location>
        <begin position="2"/>
        <end position="61"/>
    </location>
</feature>
<feature type="active site" description="Proton acceptor; via imino nitrogen" evidence="1">
    <location>
        <position position="2"/>
    </location>
</feature>
<proteinExistence type="inferred from homology"/>
<comment type="similarity">
    <text evidence="2">Belongs to the 4-oxalocrotonate tautomerase family.</text>
</comment>
<keyword id="KW-0413">Isomerase</keyword>
<keyword id="KW-1185">Reference proteome</keyword>
<accession>Q8DU62</accession>
<dbReference type="EC" id="5.3.2.-"/>
<dbReference type="EMBL" id="AE014133">
    <property type="protein sequence ID" value="AAN58785.1"/>
    <property type="molecule type" value="Genomic_DNA"/>
</dbReference>
<dbReference type="RefSeq" id="NP_721479.1">
    <property type="nucleotide sequence ID" value="NC_004350.2"/>
</dbReference>
<dbReference type="RefSeq" id="WP_002262253.1">
    <property type="nucleotide sequence ID" value="NC_004350.2"/>
</dbReference>
<dbReference type="SMR" id="Q8DU62"/>
<dbReference type="STRING" id="210007.SMU_1087"/>
<dbReference type="KEGG" id="smu:SMU_1087"/>
<dbReference type="PATRIC" id="fig|210007.7.peg.974"/>
<dbReference type="eggNOG" id="COG1942">
    <property type="taxonomic scope" value="Bacteria"/>
</dbReference>
<dbReference type="HOGENOM" id="CLU_148073_5_1_9"/>
<dbReference type="OrthoDB" id="5405937at2"/>
<dbReference type="PhylomeDB" id="Q8DU62"/>
<dbReference type="Proteomes" id="UP000002512">
    <property type="component" value="Chromosome"/>
</dbReference>
<dbReference type="GO" id="GO:0016853">
    <property type="term" value="F:isomerase activity"/>
    <property type="evidence" value="ECO:0007669"/>
    <property type="project" value="UniProtKB-KW"/>
</dbReference>
<dbReference type="Gene3D" id="3.30.429.10">
    <property type="entry name" value="Macrophage Migration Inhibitory Factor"/>
    <property type="match status" value="1"/>
</dbReference>
<dbReference type="InterPro" id="IPR004370">
    <property type="entry name" value="4-OT-like_dom"/>
</dbReference>
<dbReference type="InterPro" id="IPR014347">
    <property type="entry name" value="Tautomerase/MIF_sf"/>
</dbReference>
<dbReference type="NCBIfam" id="NF002571">
    <property type="entry name" value="PRK02220.1"/>
    <property type="match status" value="1"/>
</dbReference>
<dbReference type="NCBIfam" id="NF002622">
    <property type="entry name" value="PRK02289.1"/>
    <property type="match status" value="1"/>
</dbReference>
<dbReference type="PANTHER" id="PTHR35530:SF1">
    <property type="entry name" value="2-HYDROXYMUCONATE TAUTOMERASE"/>
    <property type="match status" value="1"/>
</dbReference>
<dbReference type="PANTHER" id="PTHR35530">
    <property type="entry name" value="TAUTOMERASE-RELATED"/>
    <property type="match status" value="1"/>
</dbReference>
<dbReference type="Pfam" id="PF01361">
    <property type="entry name" value="Tautomerase"/>
    <property type="match status" value="1"/>
</dbReference>
<dbReference type="SUPFAM" id="SSF55331">
    <property type="entry name" value="Tautomerase/MIF"/>
    <property type="match status" value="1"/>
</dbReference>
<evidence type="ECO:0000250" key="1"/>
<evidence type="ECO:0000305" key="2"/>
<name>Y1087_STRMU</name>
<organism>
    <name type="scientific">Streptococcus mutans serotype c (strain ATCC 700610 / UA159)</name>
    <dbReference type="NCBI Taxonomy" id="210007"/>
    <lineage>
        <taxon>Bacteria</taxon>
        <taxon>Bacillati</taxon>
        <taxon>Bacillota</taxon>
        <taxon>Bacilli</taxon>
        <taxon>Lactobacillales</taxon>
        <taxon>Streptococcaceae</taxon>
        <taxon>Streptococcus</taxon>
    </lineage>
</organism>
<reference key="1">
    <citation type="journal article" date="2002" name="Proc. Natl. Acad. Sci. U.S.A.">
        <title>Genome sequence of Streptococcus mutans UA159, a cariogenic dental pathogen.</title>
        <authorList>
            <person name="Ajdic D.J."/>
            <person name="McShan W.M."/>
            <person name="McLaughlin R.E."/>
            <person name="Savic G."/>
            <person name="Chang J."/>
            <person name="Carson M.B."/>
            <person name="Primeaux C."/>
            <person name="Tian R."/>
            <person name="Kenton S."/>
            <person name="Jia H.G."/>
            <person name="Lin S.P."/>
            <person name="Qian Y."/>
            <person name="Li S."/>
            <person name="Zhu H."/>
            <person name="Najar F.Z."/>
            <person name="Lai H."/>
            <person name="White J."/>
            <person name="Roe B.A."/>
            <person name="Ferretti J.J."/>
        </authorList>
    </citation>
    <scope>NUCLEOTIDE SEQUENCE [LARGE SCALE GENOMIC DNA]</scope>
    <source>
        <strain>ATCC 700610 / UA159</strain>
    </source>
</reference>